<gene>
    <name evidence="5" type="primary">lptA</name>
    <name evidence="7" type="ordered locus">PA0005</name>
</gene>
<name>PLSC_PSEAE</name>
<reference key="1">
    <citation type="journal article" date="2000" name="Nature">
        <title>Complete genome sequence of Pseudomonas aeruginosa PAO1, an opportunistic pathogen.</title>
        <authorList>
            <person name="Stover C.K."/>
            <person name="Pham X.-Q.T."/>
            <person name="Erwin A.L."/>
            <person name="Mizoguchi S.D."/>
            <person name="Warrener P."/>
            <person name="Hickey M.J."/>
            <person name="Brinkman F.S.L."/>
            <person name="Hufnagle W.O."/>
            <person name="Kowalik D.J."/>
            <person name="Lagrou M."/>
            <person name="Garber R.L."/>
            <person name="Goltry L."/>
            <person name="Tolentino E."/>
            <person name="Westbrock-Wadman S."/>
            <person name="Yuan Y."/>
            <person name="Brody L.L."/>
            <person name="Coulter S.N."/>
            <person name="Folger K.R."/>
            <person name="Kas A."/>
            <person name="Larbig K."/>
            <person name="Lim R.M."/>
            <person name="Smith K.A."/>
            <person name="Spencer D.H."/>
            <person name="Wong G.K.-S."/>
            <person name="Wu Z."/>
            <person name="Paulsen I.T."/>
            <person name="Reizer J."/>
            <person name="Saier M.H. Jr."/>
            <person name="Hancock R.E.W."/>
            <person name="Lory S."/>
            <person name="Olson M.V."/>
        </authorList>
    </citation>
    <scope>NUCLEOTIDE SEQUENCE [LARGE SCALE GENOMIC DNA]</scope>
    <source>
        <strain>ATCC 15692 / DSM 22644 / CIP 104116 / JCM 14847 / LMG 12228 / 1C / PRS 101 / PAO1</strain>
    </source>
</reference>
<reference key="2">
    <citation type="journal article" date="2005" name="Microbiology">
        <title>Modulation of quorum sensing in Pseudomonas aeruginosa through alteration of membrane properties.</title>
        <authorList>
            <person name="Baysse C."/>
            <person name="Cullinane M."/>
            <person name="Denervaud V."/>
            <person name="Burrowes E."/>
            <person name="Dow J.M."/>
            <person name="Morrissey J.P."/>
            <person name="Tam L."/>
            <person name="Trevors J.T."/>
            <person name="O'Gara F."/>
        </authorList>
    </citation>
    <scope>DISRUPTION PHENOTYPE</scope>
    <source>
        <strain>ATCC 15692 / DSM 22644 / CIP 104116 / JCM 14847 / LMG 12228 / 1C / PRS 101 / PAO1</strain>
    </source>
</reference>
<proteinExistence type="inferred from homology"/>
<feature type="chain" id="PRO_0000458214" description="1-acyl-sn-glycerol-3-phosphate acyltransferase">
    <location>
        <begin position="1"/>
        <end position="257"/>
    </location>
</feature>
<feature type="transmembrane region" description="Helical" evidence="3">
    <location>
        <begin position="10"/>
        <end position="30"/>
    </location>
</feature>
<feature type="transmembrane region" description="Helical" evidence="3">
    <location>
        <begin position="105"/>
        <end position="125"/>
    </location>
</feature>
<feature type="short sequence motif" description="HXXXXD motif" evidence="6">
    <location>
        <begin position="82"/>
        <end position="87"/>
    </location>
</feature>
<sequence length="257" mass="28661">MSTVQAIRTVLFYLLLSASAFVWGTLSFFIAPILPFRARYRFVVQNWCRFAIWLTRVVAGIRYEVRGLENIPEKPCVILSKHQSTWETFFLSGFFEPLSQVLKRELLYVPFFGWALALLKPIAIDRSQPKLALKQLAKQGDECLKKGAWVLIFPEGTRIPVGQMGKFSRGGTALAVNAGLPVLPIAHNAGQYWPKAGWAKYPGTIQVVIGPAMHAEGEGPRAIAELNQRAEAWVSETMAEISPIQQRVSHPEPSVVS</sequence>
<organism>
    <name type="scientific">Pseudomonas aeruginosa (strain ATCC 15692 / DSM 22644 / CIP 104116 / JCM 14847 / LMG 12228 / 1C / PRS 101 / PAO1)</name>
    <dbReference type="NCBI Taxonomy" id="208964"/>
    <lineage>
        <taxon>Bacteria</taxon>
        <taxon>Pseudomonadati</taxon>
        <taxon>Pseudomonadota</taxon>
        <taxon>Gammaproteobacteria</taxon>
        <taxon>Pseudomonadales</taxon>
        <taxon>Pseudomonadaceae</taxon>
        <taxon>Pseudomonas</taxon>
    </lineage>
</organism>
<dbReference type="EC" id="2.3.1.51" evidence="1"/>
<dbReference type="EMBL" id="AE004091">
    <property type="protein sequence ID" value="AAG03395.1"/>
    <property type="molecule type" value="Genomic_DNA"/>
</dbReference>
<dbReference type="PIR" id="A83645">
    <property type="entry name" value="A83645"/>
</dbReference>
<dbReference type="RefSeq" id="NP_064725.1">
    <property type="nucleotide sequence ID" value="NC_002516.2"/>
</dbReference>
<dbReference type="RefSeq" id="WP_003100265.1">
    <property type="nucleotide sequence ID" value="NZ_QZGE01000012.1"/>
</dbReference>
<dbReference type="SMR" id="Q9I7C1"/>
<dbReference type="STRING" id="208964.PA0005"/>
<dbReference type="PaxDb" id="208964-PA0005"/>
<dbReference type="DNASU" id="877576"/>
<dbReference type="GeneID" id="877576"/>
<dbReference type="KEGG" id="pae:PA0005"/>
<dbReference type="PATRIC" id="fig|208964.12.peg.5"/>
<dbReference type="PseudoCAP" id="PA0005"/>
<dbReference type="HOGENOM" id="CLU_027938_5_0_6"/>
<dbReference type="InParanoid" id="Q9I7C1"/>
<dbReference type="OrthoDB" id="9812274at2"/>
<dbReference type="PhylomeDB" id="Q9I7C1"/>
<dbReference type="BioCyc" id="PAER208964:G1FZ6-5-MONOMER"/>
<dbReference type="UniPathway" id="UPA00557">
    <property type="reaction ID" value="UER00613"/>
</dbReference>
<dbReference type="PHI-base" id="PHI:3786"/>
<dbReference type="Proteomes" id="UP000002438">
    <property type="component" value="Chromosome"/>
</dbReference>
<dbReference type="GO" id="GO:0005886">
    <property type="term" value="C:plasma membrane"/>
    <property type="evidence" value="ECO:0007669"/>
    <property type="project" value="UniProtKB-SubCell"/>
</dbReference>
<dbReference type="GO" id="GO:0003841">
    <property type="term" value="F:1-acylglycerol-3-phosphate O-acyltransferase activity"/>
    <property type="evidence" value="ECO:0000318"/>
    <property type="project" value="GO_Central"/>
</dbReference>
<dbReference type="GO" id="GO:0042171">
    <property type="term" value="F:lysophosphatidic acid acyltransferase activity"/>
    <property type="evidence" value="ECO:0000315"/>
    <property type="project" value="PseudoCAP"/>
</dbReference>
<dbReference type="GO" id="GO:0016024">
    <property type="term" value="P:CDP-diacylglycerol biosynthetic process"/>
    <property type="evidence" value="ECO:0007669"/>
    <property type="project" value="UniProtKB-UniPathway"/>
</dbReference>
<dbReference type="GO" id="GO:0006654">
    <property type="term" value="P:phosphatidic acid biosynthetic process"/>
    <property type="evidence" value="ECO:0000318"/>
    <property type="project" value="GO_Central"/>
</dbReference>
<dbReference type="GO" id="GO:0008654">
    <property type="term" value="P:phospholipid biosynthetic process"/>
    <property type="evidence" value="ECO:0000315"/>
    <property type="project" value="PseudoCAP"/>
</dbReference>
<dbReference type="CDD" id="cd07989">
    <property type="entry name" value="LPLAT_AGPAT-like"/>
    <property type="match status" value="1"/>
</dbReference>
<dbReference type="InterPro" id="IPR002123">
    <property type="entry name" value="Plipid/glycerol_acylTrfase"/>
</dbReference>
<dbReference type="PANTHER" id="PTHR10434">
    <property type="entry name" value="1-ACYL-SN-GLYCEROL-3-PHOSPHATE ACYLTRANSFERASE"/>
    <property type="match status" value="1"/>
</dbReference>
<dbReference type="PANTHER" id="PTHR10434:SF40">
    <property type="entry name" value="1-ACYL-SN-GLYCEROL-3-PHOSPHATE ACYLTRANSFERASE"/>
    <property type="match status" value="1"/>
</dbReference>
<dbReference type="Pfam" id="PF01553">
    <property type="entry name" value="Acyltransferase"/>
    <property type="match status" value="1"/>
</dbReference>
<dbReference type="SMART" id="SM00563">
    <property type="entry name" value="PlsC"/>
    <property type="match status" value="1"/>
</dbReference>
<dbReference type="SUPFAM" id="SSF69593">
    <property type="entry name" value="Glycerol-3-phosphate (1)-acyltransferase"/>
    <property type="match status" value="1"/>
</dbReference>
<keyword id="KW-0012">Acyltransferase</keyword>
<keyword id="KW-0997">Cell inner membrane</keyword>
<keyword id="KW-1003">Cell membrane</keyword>
<keyword id="KW-0444">Lipid biosynthesis</keyword>
<keyword id="KW-0443">Lipid metabolism</keyword>
<keyword id="KW-0472">Membrane</keyword>
<keyword id="KW-0594">Phospholipid biosynthesis</keyword>
<keyword id="KW-1208">Phospholipid metabolism</keyword>
<keyword id="KW-1185">Reference proteome</keyword>
<keyword id="KW-0808">Transferase</keyword>
<keyword id="KW-0812">Transmembrane</keyword>
<keyword id="KW-1133">Transmembrane helix</keyword>
<comment type="function">
    <text evidence="1">Converts lysophosphatidic acid (LPA) into phosphatidic acid by incorporating acyl moiety at the 2 position.</text>
</comment>
<comment type="catalytic activity">
    <reaction evidence="1">
        <text>a 1-acyl-sn-glycero-3-phosphate + an acyl-CoA = a 1,2-diacyl-sn-glycero-3-phosphate + CoA</text>
        <dbReference type="Rhea" id="RHEA:19709"/>
        <dbReference type="ChEBI" id="CHEBI:57287"/>
        <dbReference type="ChEBI" id="CHEBI:57970"/>
        <dbReference type="ChEBI" id="CHEBI:58342"/>
        <dbReference type="ChEBI" id="CHEBI:58608"/>
        <dbReference type="EC" id="2.3.1.51"/>
    </reaction>
</comment>
<comment type="pathway">
    <text evidence="1">Phospholipid metabolism; CDP-diacylglycerol biosynthesis; CDP-diacylglycerol from sn-glycerol 3-phosphate: step 2/3.</text>
</comment>
<comment type="subcellular location">
    <subcellularLocation>
        <location evidence="6">Cell inner membrane</location>
        <topology evidence="3">Multi-pass membrane protein</topology>
    </subcellularLocation>
</comment>
<comment type="domain">
    <text evidence="2">The HXXXXD motif is essential for acyltransferase activity and may constitute the binding site for the phosphate moiety of the glycerol-3-phosphate.</text>
</comment>
<comment type="disruption phenotype">
    <text evidence="4">Inactivation of the gene alters the fatty acid profile of the membrane phospholipids by increasing the proportion of longer-chain (C18) fatty acids (PubMed:16079332). It leads to structural changes in the bacterial membrane and alters the membrane properties, resulting in decreased membrane fluidity (PubMed:16079332). This leads to the premature expression of a number of genes, including relA and those involved in the quorum-sensing (QS) system, resulting in a premature production of the QS signals N-butanoyl- and N-hexanoyl-homoserine lactone (C4-HSL and C6-HSL) and a repression of 2-heptyl-3-hydroxy-4-quinolone (PQS) synthesis at later growth phases (PubMed:16079332).</text>
</comment>
<comment type="miscellaneous">
    <text evidence="4">Can complement the E.coli plsC mutant.</text>
</comment>
<comment type="similarity">
    <text evidence="6">Belongs to the 1-acyl-sn-glycerol-3-phosphate acyltransferase family.</text>
</comment>
<evidence type="ECO:0000250" key="1">
    <source>
        <dbReference type="UniProtKB" id="P26647"/>
    </source>
</evidence>
<evidence type="ECO:0000250" key="2">
    <source>
        <dbReference type="UniProtKB" id="Q9D517"/>
    </source>
</evidence>
<evidence type="ECO:0000255" key="3"/>
<evidence type="ECO:0000269" key="4">
    <source>
    </source>
</evidence>
<evidence type="ECO:0000303" key="5">
    <source>
    </source>
</evidence>
<evidence type="ECO:0000305" key="6"/>
<evidence type="ECO:0000312" key="7">
    <source>
        <dbReference type="EMBL" id="AAG03395.1"/>
    </source>
</evidence>
<protein>
    <recommendedName>
        <fullName evidence="1">1-acyl-sn-glycerol-3-phosphate acyltransferase</fullName>
        <shortName evidence="1">1-AGP acyltransferase</shortName>
        <shortName evidence="1">1-AGPAT</shortName>
        <ecNumber evidence="1">2.3.1.51</ecNumber>
    </recommendedName>
    <alternativeName>
        <fullName evidence="5">Lysophosphatidic acid acyltransferase A</fullName>
        <shortName evidence="5">LPA acyltransferase</shortName>
        <shortName evidence="6">LPAAT</shortName>
    </alternativeName>
</protein>
<accession>Q9I7C1</accession>